<comment type="function">
    <text evidence="1">This protein specifically catalyzes the removal of signal peptides from prolipoproteins.</text>
</comment>
<comment type="catalytic activity">
    <reaction evidence="1">
        <text>Release of signal peptides from bacterial membrane prolipoproteins. Hydrolyzes -Xaa-Yaa-Zaa-|-(S,diacylglyceryl)Cys-, in which Xaa is hydrophobic (preferably Leu), and Yaa (Ala or Ser) and Zaa (Gly or Ala) have small, neutral side chains.</text>
        <dbReference type="EC" id="3.4.23.36"/>
    </reaction>
</comment>
<comment type="pathway">
    <text evidence="1">Protein modification; lipoprotein biosynthesis (signal peptide cleavage).</text>
</comment>
<comment type="subcellular location">
    <subcellularLocation>
        <location evidence="1">Cell inner membrane</location>
        <topology evidence="1">Multi-pass membrane protein</topology>
    </subcellularLocation>
</comment>
<comment type="similarity">
    <text evidence="1">Belongs to the peptidase A8 family.</text>
</comment>
<feature type="chain" id="PRO_0000289453" description="Lipoprotein signal peptidase">
    <location>
        <begin position="1"/>
        <end position="153"/>
    </location>
</feature>
<feature type="transmembrane region" description="Helical" evidence="1">
    <location>
        <begin position="11"/>
        <end position="31"/>
    </location>
</feature>
<feature type="transmembrane region" description="Helical" evidence="1">
    <location>
        <begin position="39"/>
        <end position="59"/>
    </location>
</feature>
<feature type="transmembrane region" description="Helical" evidence="1">
    <location>
        <begin position="68"/>
        <end position="88"/>
    </location>
</feature>
<feature type="transmembrane region" description="Helical" evidence="1">
    <location>
        <begin position="122"/>
        <end position="142"/>
    </location>
</feature>
<feature type="active site" evidence="1">
    <location>
        <position position="112"/>
    </location>
</feature>
<feature type="active site" evidence="1">
    <location>
        <position position="129"/>
    </location>
</feature>
<protein>
    <recommendedName>
        <fullName evidence="1">Lipoprotein signal peptidase</fullName>
        <ecNumber evidence="1">3.4.23.36</ecNumber>
    </recommendedName>
    <alternativeName>
        <fullName evidence="1">Prolipoprotein signal peptidase</fullName>
    </alternativeName>
    <alternativeName>
        <fullName evidence="1">Signal peptidase II</fullName>
        <shortName evidence="1">SPase II</shortName>
    </alternativeName>
</protein>
<sequence length="153" mass="17567">MHNKTVRHLTILILTIAGIFIIDQNIKSLFVDGYRYYSDCIDLILVYNKGVAFSMFAFLDESLKYIQLVLVFGVFGYMLYLNQLCYAIPAGLMLGGAFSNIYDRFIHGGVVDMVYWHCGFDFAVFNFADVMIDVAVVWILLLNFKPKFCKNHS</sequence>
<evidence type="ECO:0000255" key="1">
    <source>
        <dbReference type="HAMAP-Rule" id="MF_00161"/>
    </source>
</evidence>
<keyword id="KW-0064">Aspartyl protease</keyword>
<keyword id="KW-0997">Cell inner membrane</keyword>
<keyword id="KW-1003">Cell membrane</keyword>
<keyword id="KW-0378">Hydrolase</keyword>
<keyword id="KW-0472">Membrane</keyword>
<keyword id="KW-0645">Protease</keyword>
<keyword id="KW-1185">Reference proteome</keyword>
<keyword id="KW-0812">Transmembrane</keyword>
<keyword id="KW-1133">Transmembrane helix</keyword>
<organism>
    <name type="scientific">Sulfurimonas denitrificans (strain ATCC 33889 / DSM 1251)</name>
    <name type="common">Thiomicrospira denitrificans (strain ATCC 33889 / DSM 1251)</name>
    <dbReference type="NCBI Taxonomy" id="326298"/>
    <lineage>
        <taxon>Bacteria</taxon>
        <taxon>Pseudomonadati</taxon>
        <taxon>Campylobacterota</taxon>
        <taxon>Epsilonproteobacteria</taxon>
        <taxon>Campylobacterales</taxon>
        <taxon>Sulfurimonadaceae</taxon>
        <taxon>Sulfurimonas</taxon>
    </lineage>
</organism>
<gene>
    <name evidence="1" type="primary">lspA</name>
    <name type="ordered locus">Suden_2038</name>
</gene>
<accession>Q30NW9</accession>
<reference key="1">
    <citation type="journal article" date="2008" name="Appl. Environ. Microbiol.">
        <title>Genome of the epsilonproteobacterial chemolithoautotroph Sulfurimonas denitrificans.</title>
        <authorList>
            <person name="Sievert S.M."/>
            <person name="Scott K.M."/>
            <person name="Klotz M.G."/>
            <person name="Chain P.S.G."/>
            <person name="Hauser L.J."/>
            <person name="Hemp J."/>
            <person name="Huegler M."/>
            <person name="Land M."/>
            <person name="Lapidus A."/>
            <person name="Larimer F.W."/>
            <person name="Lucas S."/>
            <person name="Malfatti S.A."/>
            <person name="Meyer F."/>
            <person name="Paulsen I.T."/>
            <person name="Ren Q."/>
            <person name="Simon J."/>
            <person name="Bailey K."/>
            <person name="Diaz E."/>
            <person name="Fitzpatrick K.A."/>
            <person name="Glover B."/>
            <person name="Gwatney N."/>
            <person name="Korajkic A."/>
            <person name="Long A."/>
            <person name="Mobberley J.M."/>
            <person name="Pantry S.N."/>
            <person name="Pazder G."/>
            <person name="Peterson S."/>
            <person name="Quintanilla J.D."/>
            <person name="Sprinkle R."/>
            <person name="Stephens J."/>
            <person name="Thomas P."/>
            <person name="Vaughn R."/>
            <person name="Weber M.J."/>
            <person name="Wooten L.L."/>
        </authorList>
    </citation>
    <scope>NUCLEOTIDE SEQUENCE [LARGE SCALE GENOMIC DNA]</scope>
    <source>
        <strain>ATCC 33889 / DSM 1251</strain>
    </source>
</reference>
<proteinExistence type="inferred from homology"/>
<dbReference type="EC" id="3.4.23.36" evidence="1"/>
<dbReference type="EMBL" id="CP000153">
    <property type="protein sequence ID" value="ABB45312.1"/>
    <property type="molecule type" value="Genomic_DNA"/>
</dbReference>
<dbReference type="RefSeq" id="WP_011373652.1">
    <property type="nucleotide sequence ID" value="NC_007575.1"/>
</dbReference>
<dbReference type="SMR" id="Q30NW9"/>
<dbReference type="STRING" id="326298.Suden_2038"/>
<dbReference type="KEGG" id="tdn:Suden_2038"/>
<dbReference type="eggNOG" id="COG0597">
    <property type="taxonomic scope" value="Bacteria"/>
</dbReference>
<dbReference type="HOGENOM" id="CLU_083252_4_3_7"/>
<dbReference type="OrthoDB" id="9810259at2"/>
<dbReference type="UniPathway" id="UPA00665"/>
<dbReference type="Proteomes" id="UP000002714">
    <property type="component" value="Chromosome"/>
</dbReference>
<dbReference type="GO" id="GO:0005886">
    <property type="term" value="C:plasma membrane"/>
    <property type="evidence" value="ECO:0007669"/>
    <property type="project" value="UniProtKB-SubCell"/>
</dbReference>
<dbReference type="GO" id="GO:0004190">
    <property type="term" value="F:aspartic-type endopeptidase activity"/>
    <property type="evidence" value="ECO:0007669"/>
    <property type="project" value="UniProtKB-UniRule"/>
</dbReference>
<dbReference type="GO" id="GO:0006508">
    <property type="term" value="P:proteolysis"/>
    <property type="evidence" value="ECO:0007669"/>
    <property type="project" value="UniProtKB-KW"/>
</dbReference>
<dbReference type="HAMAP" id="MF_00161">
    <property type="entry name" value="LspA"/>
    <property type="match status" value="1"/>
</dbReference>
<dbReference type="InterPro" id="IPR001872">
    <property type="entry name" value="Peptidase_A8"/>
</dbReference>
<dbReference type="NCBIfam" id="TIGR00077">
    <property type="entry name" value="lspA"/>
    <property type="match status" value="1"/>
</dbReference>
<dbReference type="PANTHER" id="PTHR33695">
    <property type="entry name" value="LIPOPROTEIN SIGNAL PEPTIDASE"/>
    <property type="match status" value="1"/>
</dbReference>
<dbReference type="PANTHER" id="PTHR33695:SF1">
    <property type="entry name" value="LIPOPROTEIN SIGNAL PEPTIDASE"/>
    <property type="match status" value="1"/>
</dbReference>
<dbReference type="Pfam" id="PF01252">
    <property type="entry name" value="Peptidase_A8"/>
    <property type="match status" value="1"/>
</dbReference>
<dbReference type="PRINTS" id="PR00781">
    <property type="entry name" value="LIPOSIGPTASE"/>
</dbReference>
<dbReference type="PROSITE" id="PS00855">
    <property type="entry name" value="SPASE_II"/>
    <property type="match status" value="1"/>
</dbReference>
<name>LSPA_SULDN</name>